<keyword id="KW-0456">Lyase</keyword>
<keyword id="KW-1185">Reference proteome</keyword>
<sequence length="308" mass="34040">MSRIRKAPAGILGFPVAPFNTQGKLEEEALFQNIEFLLNEGLEAIFIACGSGEFQSLSQKEYEQMVEVAVSAAGGKVPVYTGVGGNLSTALDWAQLSEKKGADGYLILPPYLVHGEQEGLYQYAKTIIESTDLNAILYQRDNAVLSVEQIKRLTECEQLVGVKDGVGNMDLNINLVYTIGDRLGWLNGMPMAEVTMPAYLPIGFHSYSSAISNYIPHISRMFYDALKNGNDELVKELYRHVILPINDIRKQRKGYAVSLIKAGMEIMGLNVRNTARPPVGPVEKDHYQQLEAILKQAADRFPKKAATV</sequence>
<reference key="1">
    <citation type="journal article" date="1995" name="Microbiology">
        <title>Determination of a 21548 bp nucleotide sequence around the 24 degrees region of the Bacillus subtilis chromosome.</title>
        <authorList>
            <person name="Ogawa K."/>
            <person name="Akagawa E."/>
            <person name="Nakamura K."/>
            <person name="Yamane K."/>
        </authorList>
    </citation>
    <scope>NUCLEOTIDE SEQUENCE [GENOMIC DNA]</scope>
    <source>
        <strain>168</strain>
    </source>
</reference>
<reference key="2">
    <citation type="journal article" date="1997" name="Nature">
        <title>The complete genome sequence of the Gram-positive bacterium Bacillus subtilis.</title>
        <authorList>
            <person name="Kunst F."/>
            <person name="Ogasawara N."/>
            <person name="Moszer I."/>
            <person name="Albertini A.M."/>
            <person name="Alloni G."/>
            <person name="Azevedo V."/>
            <person name="Bertero M.G."/>
            <person name="Bessieres P."/>
            <person name="Bolotin A."/>
            <person name="Borchert S."/>
            <person name="Borriss R."/>
            <person name="Boursier L."/>
            <person name="Brans A."/>
            <person name="Braun M."/>
            <person name="Brignell S.C."/>
            <person name="Bron S."/>
            <person name="Brouillet S."/>
            <person name="Bruschi C.V."/>
            <person name="Caldwell B."/>
            <person name="Capuano V."/>
            <person name="Carter N.M."/>
            <person name="Choi S.-K."/>
            <person name="Codani J.-J."/>
            <person name="Connerton I.F."/>
            <person name="Cummings N.J."/>
            <person name="Daniel R.A."/>
            <person name="Denizot F."/>
            <person name="Devine K.M."/>
            <person name="Duesterhoeft A."/>
            <person name="Ehrlich S.D."/>
            <person name="Emmerson P.T."/>
            <person name="Entian K.-D."/>
            <person name="Errington J."/>
            <person name="Fabret C."/>
            <person name="Ferrari E."/>
            <person name="Foulger D."/>
            <person name="Fritz C."/>
            <person name="Fujita M."/>
            <person name="Fujita Y."/>
            <person name="Fuma S."/>
            <person name="Galizzi A."/>
            <person name="Galleron N."/>
            <person name="Ghim S.-Y."/>
            <person name="Glaser P."/>
            <person name="Goffeau A."/>
            <person name="Golightly E.J."/>
            <person name="Grandi G."/>
            <person name="Guiseppi G."/>
            <person name="Guy B.J."/>
            <person name="Haga K."/>
            <person name="Haiech J."/>
            <person name="Harwood C.R."/>
            <person name="Henaut A."/>
            <person name="Hilbert H."/>
            <person name="Holsappel S."/>
            <person name="Hosono S."/>
            <person name="Hullo M.-F."/>
            <person name="Itaya M."/>
            <person name="Jones L.-M."/>
            <person name="Joris B."/>
            <person name="Karamata D."/>
            <person name="Kasahara Y."/>
            <person name="Klaerr-Blanchard M."/>
            <person name="Klein C."/>
            <person name="Kobayashi Y."/>
            <person name="Koetter P."/>
            <person name="Koningstein G."/>
            <person name="Krogh S."/>
            <person name="Kumano M."/>
            <person name="Kurita K."/>
            <person name="Lapidus A."/>
            <person name="Lardinois S."/>
            <person name="Lauber J."/>
            <person name="Lazarevic V."/>
            <person name="Lee S.-M."/>
            <person name="Levine A."/>
            <person name="Liu H."/>
            <person name="Masuda S."/>
            <person name="Mauel C."/>
            <person name="Medigue C."/>
            <person name="Medina N."/>
            <person name="Mellado R.P."/>
            <person name="Mizuno M."/>
            <person name="Moestl D."/>
            <person name="Nakai S."/>
            <person name="Noback M."/>
            <person name="Noone D."/>
            <person name="O'Reilly M."/>
            <person name="Ogawa K."/>
            <person name="Ogiwara A."/>
            <person name="Oudega B."/>
            <person name="Park S.-H."/>
            <person name="Parro V."/>
            <person name="Pohl T.M."/>
            <person name="Portetelle D."/>
            <person name="Porwollik S."/>
            <person name="Prescott A.M."/>
            <person name="Presecan E."/>
            <person name="Pujic P."/>
            <person name="Purnelle B."/>
            <person name="Rapoport G."/>
            <person name="Rey M."/>
            <person name="Reynolds S."/>
            <person name="Rieger M."/>
            <person name="Rivolta C."/>
            <person name="Rocha E."/>
            <person name="Roche B."/>
            <person name="Rose M."/>
            <person name="Sadaie Y."/>
            <person name="Sato T."/>
            <person name="Scanlan E."/>
            <person name="Schleich S."/>
            <person name="Schroeter R."/>
            <person name="Scoffone F."/>
            <person name="Sekiguchi J."/>
            <person name="Sekowska A."/>
            <person name="Seror S.J."/>
            <person name="Serror P."/>
            <person name="Shin B.-S."/>
            <person name="Soldo B."/>
            <person name="Sorokin A."/>
            <person name="Tacconi E."/>
            <person name="Takagi T."/>
            <person name="Takahashi H."/>
            <person name="Takemaru K."/>
            <person name="Takeuchi M."/>
            <person name="Tamakoshi A."/>
            <person name="Tanaka T."/>
            <person name="Terpstra P."/>
            <person name="Tognoni A."/>
            <person name="Tosato V."/>
            <person name="Uchiyama S."/>
            <person name="Vandenbol M."/>
            <person name="Vannier F."/>
            <person name="Vassarotti A."/>
            <person name="Viari A."/>
            <person name="Wambutt R."/>
            <person name="Wedler E."/>
            <person name="Wedler H."/>
            <person name="Weitzenegger T."/>
            <person name="Winters P."/>
            <person name="Wipat A."/>
            <person name="Yamamoto H."/>
            <person name="Yamane K."/>
            <person name="Yasumoto K."/>
            <person name="Yata K."/>
            <person name="Yoshida K."/>
            <person name="Yoshikawa H.-F."/>
            <person name="Zumstein E."/>
            <person name="Yoshikawa H."/>
            <person name="Danchin A."/>
        </authorList>
    </citation>
    <scope>NUCLEOTIDE SEQUENCE [LARGE SCALE GENOMIC DNA]</scope>
    <source>
        <strain>168</strain>
    </source>
</reference>
<reference key="3">
    <citation type="journal article" date="2009" name="Microbiology">
        <title>From a consortium sequence to a unified sequence: the Bacillus subtilis 168 reference genome a decade later.</title>
        <authorList>
            <person name="Barbe V."/>
            <person name="Cruveiller S."/>
            <person name="Kunst F."/>
            <person name="Lenoble P."/>
            <person name="Meurice G."/>
            <person name="Sekowska A."/>
            <person name="Vallenet D."/>
            <person name="Wang T."/>
            <person name="Moszer I."/>
            <person name="Medigue C."/>
            <person name="Danchin A."/>
        </authorList>
    </citation>
    <scope>SEQUENCE REVISION TO 24 AND 297</scope>
</reference>
<evidence type="ECO:0000255" key="1">
    <source>
        <dbReference type="HAMAP-Rule" id="MF_00694"/>
    </source>
</evidence>
<evidence type="ECO:0000305" key="2"/>
<gene>
    <name type="primary">ycbC</name>
    <name type="ordered locus">BSU02460</name>
</gene>
<proteinExistence type="inferred from homology"/>
<organism>
    <name type="scientific">Bacillus subtilis (strain 168)</name>
    <dbReference type="NCBI Taxonomy" id="224308"/>
    <lineage>
        <taxon>Bacteria</taxon>
        <taxon>Bacillati</taxon>
        <taxon>Bacillota</taxon>
        <taxon>Bacilli</taxon>
        <taxon>Bacillales</taxon>
        <taxon>Bacillaceae</taxon>
        <taxon>Bacillus</taxon>
    </lineage>
</organism>
<dbReference type="EC" id="4.2.1.41" evidence="1"/>
<dbReference type="EMBL" id="D30808">
    <property type="protein sequence ID" value="BAA06467.1"/>
    <property type="molecule type" value="Genomic_DNA"/>
</dbReference>
<dbReference type="EMBL" id="AL009126">
    <property type="protein sequence ID" value="CAB12040.2"/>
    <property type="molecule type" value="Genomic_DNA"/>
</dbReference>
<dbReference type="PIR" id="F69752">
    <property type="entry name" value="F69752"/>
</dbReference>
<dbReference type="SMR" id="P42235"/>
<dbReference type="FunCoup" id="P42235">
    <property type="interactions" value="59"/>
</dbReference>
<dbReference type="STRING" id="224308.BSU02460"/>
<dbReference type="PaxDb" id="224308-BSU02460"/>
<dbReference type="DNASU" id="938409"/>
<dbReference type="EnsemblBacteria" id="CAB12040">
    <property type="protein sequence ID" value="CAB12040"/>
    <property type="gene ID" value="BSU_02460"/>
</dbReference>
<dbReference type="GeneID" id="938409"/>
<dbReference type="KEGG" id="bsu:BSU02460"/>
<dbReference type="PATRIC" id="fig|224308.179.peg.253"/>
<dbReference type="eggNOG" id="COG0329">
    <property type="taxonomic scope" value="Bacteria"/>
</dbReference>
<dbReference type="InParanoid" id="P42235"/>
<dbReference type="OrthoDB" id="9778880at2"/>
<dbReference type="PhylomeDB" id="P42235"/>
<dbReference type="BioCyc" id="BSUB:BSU02460-MONOMER"/>
<dbReference type="UniPathway" id="UPA00564">
    <property type="reaction ID" value="UER00628"/>
</dbReference>
<dbReference type="Proteomes" id="UP000001570">
    <property type="component" value="Chromosome"/>
</dbReference>
<dbReference type="GO" id="GO:0008840">
    <property type="term" value="F:4-hydroxy-tetrahydrodipicolinate synthase activity"/>
    <property type="evidence" value="ECO:0000318"/>
    <property type="project" value="GO_Central"/>
</dbReference>
<dbReference type="GO" id="GO:0047448">
    <property type="term" value="F:5-dehydro-4-deoxyglucarate dehydratase activity"/>
    <property type="evidence" value="ECO:0007669"/>
    <property type="project" value="UniProtKB-UniRule"/>
</dbReference>
<dbReference type="GO" id="GO:0042838">
    <property type="term" value="P:D-glucarate catabolic process"/>
    <property type="evidence" value="ECO:0007669"/>
    <property type="project" value="UniProtKB-UniRule"/>
</dbReference>
<dbReference type="CDD" id="cd00951">
    <property type="entry name" value="KDGDH"/>
    <property type="match status" value="1"/>
</dbReference>
<dbReference type="Gene3D" id="3.20.20.70">
    <property type="entry name" value="Aldolase class I"/>
    <property type="match status" value="1"/>
</dbReference>
<dbReference type="HAMAP" id="MF_00694">
    <property type="entry name" value="KDGDH"/>
    <property type="match status" value="1"/>
</dbReference>
<dbReference type="InterPro" id="IPR013785">
    <property type="entry name" value="Aldolase_TIM"/>
</dbReference>
<dbReference type="InterPro" id="IPR002220">
    <property type="entry name" value="DapA-like"/>
</dbReference>
<dbReference type="InterPro" id="IPR017655">
    <property type="entry name" value="Dehydro-deoxyglucarate_dehyd"/>
</dbReference>
<dbReference type="NCBIfam" id="TIGR03249">
    <property type="entry name" value="KdgD"/>
    <property type="match status" value="1"/>
</dbReference>
<dbReference type="NCBIfam" id="NF002958">
    <property type="entry name" value="PRK03620.1"/>
    <property type="match status" value="1"/>
</dbReference>
<dbReference type="PANTHER" id="PTHR12128:SF19">
    <property type="entry name" value="5-DEHYDRO-4-DEOXYGLUCARATE DEHYDRATASE 2-RELATED"/>
    <property type="match status" value="1"/>
</dbReference>
<dbReference type="PANTHER" id="PTHR12128">
    <property type="entry name" value="DIHYDRODIPICOLINATE SYNTHASE"/>
    <property type="match status" value="1"/>
</dbReference>
<dbReference type="Pfam" id="PF00701">
    <property type="entry name" value="DHDPS"/>
    <property type="match status" value="1"/>
</dbReference>
<dbReference type="PIRSF" id="PIRSF001365">
    <property type="entry name" value="DHDPS"/>
    <property type="match status" value="1"/>
</dbReference>
<dbReference type="SMART" id="SM01130">
    <property type="entry name" value="DHDPS"/>
    <property type="match status" value="1"/>
</dbReference>
<dbReference type="SUPFAM" id="SSF51569">
    <property type="entry name" value="Aldolase"/>
    <property type="match status" value="1"/>
</dbReference>
<feature type="chain" id="PRO_0000103230" description="Probable 5-dehydro-4-deoxyglucarate dehydratase">
    <location>
        <begin position="1"/>
        <end position="308"/>
    </location>
</feature>
<feature type="sequence conflict" description="In Ref. 1; BAA06467." evidence="2" ref="1">
    <original>K</original>
    <variation>T</variation>
    <location>
        <position position="24"/>
    </location>
</feature>
<feature type="sequence conflict" description="In Ref. 1; BAA06467." evidence="2" ref="1">
    <original>A</original>
    <variation>P</variation>
    <location>
        <position position="297"/>
    </location>
</feature>
<accession>P42235</accession>
<name>KDGD_BACSU</name>
<comment type="catalytic activity">
    <reaction evidence="1">
        <text>5-dehydro-4-deoxy-D-glucarate + H(+) = 2,5-dioxopentanoate + CO2 + H2O</text>
        <dbReference type="Rhea" id="RHEA:24608"/>
        <dbReference type="ChEBI" id="CHEBI:15377"/>
        <dbReference type="ChEBI" id="CHEBI:15378"/>
        <dbReference type="ChEBI" id="CHEBI:16526"/>
        <dbReference type="ChEBI" id="CHEBI:42819"/>
        <dbReference type="ChEBI" id="CHEBI:58136"/>
        <dbReference type="EC" id="4.2.1.41"/>
    </reaction>
</comment>
<comment type="pathway">
    <text evidence="1">Carbohydrate acid metabolism; D-glucarate degradation; 2,5-dioxopentanoate from D-glucarate: step 2/2.</text>
</comment>
<comment type="similarity">
    <text evidence="1">Belongs to the DapA family.</text>
</comment>
<protein>
    <recommendedName>
        <fullName evidence="1">Probable 5-dehydro-4-deoxyglucarate dehydratase</fullName>
        <ecNumber evidence="1">4.2.1.41</ecNumber>
    </recommendedName>
    <alternativeName>
        <fullName evidence="1">5-keto-4-deoxy-glucarate dehydratase</fullName>
        <shortName evidence="1">KDGDH</shortName>
    </alternativeName>
</protein>